<gene>
    <name type="primary">Clasrp</name>
    <name type="synonym">Sfrs16</name>
</gene>
<feature type="chain" id="PRO_0000370323" description="CLK4-associating serine/arginine rich protein">
    <location>
        <begin position="1"/>
        <end position="668"/>
    </location>
</feature>
<feature type="region of interest" description="Disordered" evidence="4">
    <location>
        <begin position="173"/>
        <end position="232"/>
    </location>
</feature>
<feature type="region of interest" description="Disordered" evidence="4">
    <location>
        <begin position="252"/>
        <end position="668"/>
    </location>
</feature>
<feature type="coiled-coil region" evidence="3">
    <location>
        <begin position="579"/>
        <end position="641"/>
    </location>
</feature>
<feature type="compositionally biased region" description="Acidic residues" evidence="4">
    <location>
        <begin position="182"/>
        <end position="214"/>
    </location>
</feature>
<feature type="compositionally biased region" description="Basic residues" evidence="4">
    <location>
        <begin position="265"/>
        <end position="283"/>
    </location>
</feature>
<feature type="compositionally biased region" description="Basic and acidic residues" evidence="4">
    <location>
        <begin position="290"/>
        <end position="313"/>
    </location>
</feature>
<feature type="compositionally biased region" description="Low complexity" evidence="4">
    <location>
        <begin position="340"/>
        <end position="353"/>
    </location>
</feature>
<feature type="compositionally biased region" description="Pro residues" evidence="4">
    <location>
        <begin position="354"/>
        <end position="365"/>
    </location>
</feature>
<feature type="compositionally biased region" description="Low complexity" evidence="4">
    <location>
        <begin position="378"/>
        <end position="395"/>
    </location>
</feature>
<feature type="compositionally biased region" description="Basic residues" evidence="4">
    <location>
        <begin position="396"/>
        <end position="435"/>
    </location>
</feature>
<feature type="compositionally biased region" description="Basic and acidic residues" evidence="4">
    <location>
        <begin position="436"/>
        <end position="446"/>
    </location>
</feature>
<feature type="compositionally biased region" description="Basic residues" evidence="4">
    <location>
        <begin position="475"/>
        <end position="486"/>
    </location>
</feature>
<feature type="compositionally biased region" description="Low complexity" evidence="4">
    <location>
        <begin position="487"/>
        <end position="510"/>
    </location>
</feature>
<feature type="compositionally biased region" description="Low complexity" evidence="4">
    <location>
        <begin position="518"/>
        <end position="527"/>
    </location>
</feature>
<feature type="compositionally biased region" description="Basic and acidic residues" evidence="4">
    <location>
        <begin position="584"/>
        <end position="611"/>
    </location>
</feature>
<feature type="compositionally biased region" description="Basic and acidic residues" evidence="4">
    <location>
        <begin position="619"/>
        <end position="635"/>
    </location>
</feature>
<feature type="compositionally biased region" description="Low complexity" evidence="4">
    <location>
        <begin position="636"/>
        <end position="645"/>
    </location>
</feature>
<feature type="compositionally biased region" description="Basic residues" evidence="4">
    <location>
        <begin position="653"/>
        <end position="668"/>
    </location>
</feature>
<feature type="modified residue" description="Phosphoserine" evidence="2">
    <location>
        <position position="101"/>
    </location>
</feature>
<feature type="modified residue" description="Phosphoserine" evidence="2">
    <location>
        <position position="285"/>
    </location>
</feature>
<feature type="modified residue" description="Phosphoserine" evidence="6">
    <location>
        <position position="294"/>
    </location>
</feature>
<feature type="modified residue" description="Phosphothreonine" evidence="2">
    <location>
        <position position="327"/>
    </location>
</feature>
<feature type="modified residue" description="Phosphoserine" evidence="2">
    <location>
        <position position="331"/>
    </location>
</feature>
<feature type="modified residue" description="Phosphoserine" evidence="2">
    <location>
        <position position="335"/>
    </location>
</feature>
<feature type="modified residue" description="Phosphoserine" evidence="6">
    <location>
        <position position="541"/>
    </location>
</feature>
<feature type="modified residue" description="Phosphothreonine" evidence="2">
    <location>
        <position position="567"/>
    </location>
</feature>
<proteinExistence type="evidence at protein level"/>
<name>CLASR_RAT</name>
<accession>Q5HZB6</accession>
<reference key="1">
    <citation type="submission" date="2005-09" db="EMBL/GenBank/DDBJ databases">
        <authorList>
            <person name="Mural R.J."/>
            <person name="Adams M.D."/>
            <person name="Myers E.W."/>
            <person name="Smith H.O."/>
            <person name="Venter J.C."/>
        </authorList>
    </citation>
    <scope>NUCLEOTIDE SEQUENCE [LARGE SCALE GENOMIC DNA]</scope>
    <source>
        <strain>Brown Norway</strain>
    </source>
</reference>
<reference key="2">
    <citation type="journal article" date="2004" name="Genome Res.">
        <title>The status, quality, and expansion of the NIH full-length cDNA project: the Mammalian Gene Collection (MGC).</title>
        <authorList>
            <consortium name="The MGC Project Team"/>
        </authorList>
    </citation>
    <scope>NUCLEOTIDE SEQUENCE [LARGE SCALE MRNA]</scope>
    <source>
        <tissue>Testis</tissue>
    </source>
</reference>
<reference key="3">
    <citation type="journal article" date="2012" name="Nat. Commun.">
        <title>Quantitative maps of protein phosphorylation sites across 14 different rat organs and tissues.</title>
        <authorList>
            <person name="Lundby A."/>
            <person name="Secher A."/>
            <person name="Lage K."/>
            <person name="Nordsborg N.B."/>
            <person name="Dmytriyev A."/>
            <person name="Lundby C."/>
            <person name="Olsen J.V."/>
        </authorList>
    </citation>
    <scope>PHOSPHORYLATION [LARGE SCALE ANALYSIS] AT SER-294 AND SER-541</scope>
    <scope>IDENTIFICATION BY MASS SPECTROMETRY [LARGE SCALE ANALYSIS]</scope>
</reference>
<organism>
    <name type="scientific">Rattus norvegicus</name>
    <name type="common">Rat</name>
    <dbReference type="NCBI Taxonomy" id="10116"/>
    <lineage>
        <taxon>Eukaryota</taxon>
        <taxon>Metazoa</taxon>
        <taxon>Chordata</taxon>
        <taxon>Craniata</taxon>
        <taxon>Vertebrata</taxon>
        <taxon>Euteleostomi</taxon>
        <taxon>Mammalia</taxon>
        <taxon>Eutheria</taxon>
        <taxon>Euarchontoglires</taxon>
        <taxon>Glires</taxon>
        <taxon>Rodentia</taxon>
        <taxon>Myomorpha</taxon>
        <taxon>Muroidea</taxon>
        <taxon>Muridae</taxon>
        <taxon>Murinae</taxon>
        <taxon>Rattus</taxon>
    </lineage>
</organism>
<dbReference type="EMBL" id="CH473979">
    <property type="protein sequence ID" value="EDM08179.1"/>
    <property type="molecule type" value="Genomic_DNA"/>
</dbReference>
<dbReference type="EMBL" id="BC089090">
    <property type="protein sequence ID" value="AAH89090.2"/>
    <property type="molecule type" value="mRNA"/>
</dbReference>
<dbReference type="RefSeq" id="NP_001019465.2">
    <property type="nucleotide sequence ID" value="NM_001024294.2"/>
</dbReference>
<dbReference type="SMR" id="Q5HZB6"/>
<dbReference type="FunCoup" id="Q5HZB6">
    <property type="interactions" value="3499"/>
</dbReference>
<dbReference type="STRING" id="10116.ENSRNOP00000075310"/>
<dbReference type="iPTMnet" id="Q5HZB6"/>
<dbReference type="PhosphoSitePlus" id="Q5HZB6"/>
<dbReference type="PaxDb" id="10116-ENSRNOP00000066334"/>
<dbReference type="Ensembl" id="ENSRNOT00000075144.3">
    <property type="protein sequence ID" value="ENSRNOP00000066334.1"/>
    <property type="gene ID" value="ENSRNOG00000046000.3"/>
</dbReference>
<dbReference type="GeneID" id="499390"/>
<dbReference type="KEGG" id="rno:499390"/>
<dbReference type="AGR" id="RGD:1563538"/>
<dbReference type="CTD" id="11129"/>
<dbReference type="RGD" id="1563538">
    <property type="gene designation" value="Clasrp"/>
</dbReference>
<dbReference type="eggNOG" id="KOG2548">
    <property type="taxonomic scope" value="Eukaryota"/>
</dbReference>
<dbReference type="GeneTree" id="ENSGT00940000153892"/>
<dbReference type="InParanoid" id="Q5HZB6"/>
<dbReference type="OMA" id="YSECAPV"/>
<dbReference type="OrthoDB" id="10070965at2759"/>
<dbReference type="PhylomeDB" id="Q5HZB6"/>
<dbReference type="PRO" id="PR:Q5HZB6"/>
<dbReference type="Proteomes" id="UP000002494">
    <property type="component" value="Chromosome 1"/>
</dbReference>
<dbReference type="Proteomes" id="UP000234681">
    <property type="component" value="Chromosome 1"/>
</dbReference>
<dbReference type="Bgee" id="ENSRNOG00000046000">
    <property type="expression patterns" value="Expressed in cerebellum and 20 other cell types or tissues"/>
</dbReference>
<dbReference type="GO" id="GO:0005654">
    <property type="term" value="C:nucleoplasm"/>
    <property type="evidence" value="ECO:0007669"/>
    <property type="project" value="Ensembl"/>
</dbReference>
<dbReference type="GO" id="GO:0006397">
    <property type="term" value="P:mRNA processing"/>
    <property type="evidence" value="ECO:0007669"/>
    <property type="project" value="UniProtKB-KW"/>
</dbReference>
<dbReference type="GO" id="GO:0008380">
    <property type="term" value="P:RNA splicing"/>
    <property type="evidence" value="ECO:0007669"/>
    <property type="project" value="UniProtKB-KW"/>
</dbReference>
<dbReference type="InterPro" id="IPR040397">
    <property type="entry name" value="SWAP"/>
</dbReference>
<dbReference type="InterPro" id="IPR019147">
    <property type="entry name" value="SWAP_N_domain"/>
</dbReference>
<dbReference type="PANTHER" id="PTHR13161:SF4">
    <property type="entry name" value="CLK4-ASSOCIATING SERINE_ARGININE RICH PROTEIN"/>
    <property type="match status" value="1"/>
</dbReference>
<dbReference type="PANTHER" id="PTHR13161">
    <property type="entry name" value="SPLICING FACTOR SUPPRESSOR OF WHITE APRICOT"/>
    <property type="match status" value="1"/>
</dbReference>
<dbReference type="Pfam" id="PF09750">
    <property type="entry name" value="DRY_EERY"/>
    <property type="match status" value="1"/>
</dbReference>
<dbReference type="SMART" id="SM01141">
    <property type="entry name" value="DRY_EERY"/>
    <property type="match status" value="1"/>
</dbReference>
<sequence length="668" mass="76807">MWHEARKHERKLRGMMVDYKKRAERRREYYEKIKKDPAQFLQVHGRACKVHLDSAVALAAESPVNMMPWQGDTNNMIDRFDVRAHLDHIPDYTPPLLTTISPEQESDERKCNYERYRGLVQNDFAGISEEQCLYQIYIDELYGGLQRPSEDEKKKLAEKKASIGYTYEDSTVAEVEKVAEKPEEEESPAEEESNSDEDEVIPDIDVEVDVDELNQEQVADLNKQATTYGMADGDFVRMLRKDKEEAEAIKHAKALEEEKAMYSGRRSRRQRREFREKRLRGRKISPPSYARRDSPTYDPYKRSPSESSSESRSRSRSPSPGREEKITFITSFGGSDEEAAAAAAAAAASGAAPGKPPAPPQPGGPAPGRNASARRRSSSSSASRTSSSRSSSRSSSRSRRGYYRSGRHARSRSRSWSRSRSRSRRYSRSRSRGRRHSDGGSRDGHRYSRSPARRSGYAPRRRSRSRSRSGDRYKRGARGPRHHSSSHSRSSWSLSPSRSRSLTRSGSRSQSRSRSRSQSHSQSQSHSPSPPREKLTRPAASPAVGEKLKKTEPAAGKETGAAKPKLTPQERLKLRMQKALNRQFKADKKAAQEKMIQQEHERQEREDELRAMARKIRMKERERREKEREEWERQYSRQSRSPSPRYSREYSSSRRRSRSRSRSPHYRH</sequence>
<evidence type="ECO:0000250" key="1"/>
<evidence type="ECO:0000250" key="2">
    <source>
        <dbReference type="UniProtKB" id="Q8N2M8"/>
    </source>
</evidence>
<evidence type="ECO:0000255" key="3"/>
<evidence type="ECO:0000256" key="4">
    <source>
        <dbReference type="SAM" id="MobiDB-lite"/>
    </source>
</evidence>
<evidence type="ECO:0000305" key="5"/>
<evidence type="ECO:0007744" key="6">
    <source>
    </source>
</evidence>
<keyword id="KW-0175">Coiled coil</keyword>
<keyword id="KW-0507">mRNA processing</keyword>
<keyword id="KW-0508">mRNA splicing</keyword>
<keyword id="KW-0539">Nucleus</keyword>
<keyword id="KW-0597">Phosphoprotein</keyword>
<keyword id="KW-1185">Reference proteome</keyword>
<comment type="function">
    <text evidence="1">Probably functions as an alternative splicing regulator. May regulate the mRNA splicing of genes such as CLK1. May act by regulating members of the CLK kinase family (By similarity).</text>
</comment>
<comment type="subunit">
    <text evidence="1">Probably interacts with CLK4.</text>
</comment>
<comment type="subcellular location">
    <subcellularLocation>
        <location evidence="1">Nucleus</location>
    </subcellularLocation>
</comment>
<comment type="PTM">
    <text evidence="1">Phosphorylated in vitro by CLK4.</text>
</comment>
<comment type="similarity">
    <text evidence="5">Belongs to the splicing factor SR family.</text>
</comment>
<comment type="caution">
    <text evidence="5">It is uncertain whether Met-1 or Met-16 is the initiator.</text>
</comment>
<protein>
    <recommendedName>
        <fullName>CLK4-associating serine/arginine rich protein</fullName>
    </recommendedName>
    <alternativeName>
        <fullName>Splicing factor, arginine/serine-rich 16</fullName>
    </alternativeName>
</protein>